<name>MGLP_BAC25</name>
<comment type="function">
    <text evidence="1">Hydrolyzes monoacylglycerols, with the highest activity occurring with 1-monolauroylglycerol.</text>
</comment>
<comment type="catalytic activity">
    <reaction evidence="1 2 3">
        <text>Hydrolyzes glycerol monoesters of long-chain fatty acids.</text>
        <dbReference type="EC" id="3.1.1.23"/>
    </reaction>
</comment>
<comment type="activity regulation">
    <text evidence="1 2">Not inhibited by cholate, but slightly inhibited by triton X-100 and deoxycholate. Completely inhibited by PMSF (phenylmethylsulfonyl fluoride) at a concentration of 200 uM.</text>
</comment>
<comment type="biophysicochemical properties">
    <phDependence>
        <text>Optimum pH is 6-8.</text>
    </phDependence>
    <temperatureDependence>
        <text>Optimum temperature is 75 degrees Celsius.</text>
    </temperatureDependence>
</comment>
<comment type="subunit">
    <text evidence="1 2">Monomer.</text>
</comment>
<comment type="miscellaneous">
    <text evidence="1">This lipase is not secreted extracellularly as other bacterial lipases.</text>
</comment>
<comment type="similarity">
    <text evidence="4">Belongs to the lipase/esterase LIP3/BchO family.</text>
</comment>
<keyword id="KW-0002">3D-structure</keyword>
<keyword id="KW-0903">Direct protein sequencing</keyword>
<keyword id="KW-0378">Hydrolase</keyword>
<keyword id="KW-0719">Serine esterase</keyword>
<protein>
    <recommendedName>
        <fullName>Thermostable monoacylglycerol lipase</fullName>
        <shortName>MGLP</shortName>
        <shortName>bMGL</shortName>
        <ecNumber>3.1.1.23</ecNumber>
    </recommendedName>
</protein>
<organism>
    <name type="scientific">Bacillus sp. (strain H-257)</name>
    <dbReference type="NCBI Taxonomy" id="129908"/>
    <lineage>
        <taxon>Bacteria</taxon>
        <taxon>Bacillati</taxon>
        <taxon>Bacillota</taxon>
        <taxon>Bacilli</taxon>
        <taxon>Bacillales</taxon>
        <taxon>Bacillaceae</taxon>
        <taxon>Bacillus</taxon>
    </lineage>
</organism>
<reference evidence="5" key="1">
    <citation type="journal article" date="2001" name="J. Biochem.">
        <title>Monoacylglycerol lipase from moderately thermophilic Bacillus sp. strain H-257: molecular cloning, sequencing, and expression in Escherichia coli of the gene.</title>
        <authorList>
            <person name="Kitaura S."/>
            <person name="Suzuki K."/>
            <person name="Imamura S."/>
        </authorList>
    </citation>
    <scope>NUCLEOTIDE SEQUENCE [GENOMIC DNA]</scope>
</reference>
<reference evidence="4" key="2">
    <citation type="journal article" date="2000" name="J. Biochem.">
        <title>Purification and characterization of a monoacylglycerol lipase from the moderately thermophilic Bacillus sp. H-257.</title>
        <authorList>
            <person name="Imamura S."/>
            <person name="Kitaura S."/>
        </authorList>
    </citation>
    <scope>PROTEIN SEQUENCE OF 2-17</scope>
    <scope>FUNCTION</scope>
    <scope>CATALYTIC ACTIVITY</scope>
    <scope>ACTIVITY REGULATION</scope>
    <scope>SUBUNIT</scope>
</reference>
<reference key="3">
    <citation type="journal article" date="2012" name="Biochim. Biophys. Acta">
        <title>The structure of monoacylglycerol lipase from Bacillus sp. H257 reveals unexpected conservation of the cap architecture between bacterial and human enzymes.</title>
        <authorList>
            <person name="Rengachari S."/>
            <person name="Bezerra G.A."/>
            <person name="Riegler-Berket L."/>
            <person name="Gruber C.C."/>
            <person name="Sturm C."/>
            <person name="Taschler U."/>
            <person name="Boeszoermenyi A."/>
            <person name="Dreveny I."/>
            <person name="Zimmermann R."/>
            <person name="Gruber K."/>
            <person name="Oberer M."/>
        </authorList>
    </citation>
    <scope>X-RAY CRYSTALLOGRAPHY (1.20 ANGSTROMS) OF APOPROTEIN AND IN COMPLEX WITH INHIBITOR PMSF</scope>
    <scope>CATALYTIC ACTIVITY</scope>
    <scope>ACTIVITY REGULATION</scope>
    <scope>SUBUNIT</scope>
    <scope>ACTIVE SITE</scope>
    <source>
        <strain>H-257</strain>
    </source>
</reference>
<reference key="4">
    <citation type="journal article" date="2013" name="J. Biol. Chem.">
        <title>Conformational plasticity and ligand binding of bacterial monoacylglycerol lipase.</title>
        <authorList>
            <person name="Rengachari S."/>
            <person name="Aschauer P."/>
            <person name="Schittmayer M."/>
            <person name="Mayer N."/>
            <person name="Gruber K."/>
            <person name="Breinbauer R."/>
            <person name="Birner-Gruenberger R."/>
            <person name="Dreveny I."/>
            <person name="Oberer M."/>
        </authorList>
    </citation>
    <scope>X-RAY CRYSTALLOGRAPHY (1.70 ANGSTROMS) OF WILD-TYPE AND MUTANT ASN-196 IN COMPLEXES WITH SUBSTRATE AND SUBSTRATE ANALOGS</scope>
    <scope>CATALYTIC ACTIVITY</scope>
    <scope>ACTIVE SITE</scope>
    <scope>SITE</scope>
    <scope>MUTAGENESIS OF ILE-145 AND ASP-196</scope>
    <source>
        <strain>H-257</strain>
    </source>
</reference>
<feature type="initiator methionine" description="Removed" evidence="1">
    <location>
        <position position="1"/>
    </location>
</feature>
<feature type="chain" id="PRO_0000207072" description="Thermostable monoacylglycerol lipase">
    <location>
        <begin position="2"/>
        <end position="250"/>
    </location>
</feature>
<feature type="active site" description="Nucleophile">
    <location>
        <position position="97"/>
    </location>
</feature>
<feature type="active site" description="Charge relay system">
    <location>
        <position position="196"/>
    </location>
</feature>
<feature type="active site" description="Charge relay system">
    <location>
        <position position="226"/>
    </location>
</feature>
<feature type="binding site">
    <location>
        <position position="29"/>
    </location>
    <ligand>
        <name>substrate</name>
    </ligand>
</feature>
<feature type="binding site">
    <location>
        <position position="98"/>
    </location>
    <ligand>
        <name>substrate</name>
    </ligand>
</feature>
<feature type="site" description="Important for substrate specificity">
    <location>
        <position position="145"/>
    </location>
</feature>
<feature type="mutagenesis site" description="18% reduction in hydrolase activity for both 1-lauroylglycerol (1-LG) and 1-oleoylglycerol (1-OG)." evidence="3">
    <original>I</original>
    <variation>G</variation>
    <location>
        <position position="145"/>
    </location>
</feature>
<feature type="mutagenesis site" description="62% and 38% reduction in hydrolase activity for 1-oleoylglycerol and 1-lauroylglycerol, respectively." evidence="3">
    <original>I</original>
    <variation>S</variation>
    <location>
        <position position="145"/>
    </location>
</feature>
<feature type="mutagenesis site" description="Loss of enzyme activity." evidence="3">
    <original>D</original>
    <variation>N</variation>
    <location>
        <position position="196"/>
    </location>
</feature>
<feature type="strand" evidence="6">
    <location>
        <begin position="14"/>
        <end position="16"/>
    </location>
</feature>
<feature type="strand" evidence="6">
    <location>
        <begin position="19"/>
        <end position="26"/>
    </location>
</feature>
<feature type="helix" evidence="6">
    <location>
        <begin position="33"/>
        <end position="35"/>
    </location>
</feature>
<feature type="helix" evidence="6">
    <location>
        <begin position="37"/>
        <end position="45"/>
    </location>
</feature>
<feature type="strand" evidence="6">
    <location>
        <begin position="49"/>
        <end position="52"/>
    </location>
</feature>
<feature type="strand" evidence="7">
    <location>
        <begin position="58"/>
        <end position="60"/>
    </location>
</feature>
<feature type="helix" evidence="6">
    <location>
        <begin position="62"/>
        <end position="66"/>
    </location>
</feature>
<feature type="helix" evidence="6">
    <location>
        <begin position="70"/>
        <end position="85"/>
    </location>
</feature>
<feature type="strand" evidence="6">
    <location>
        <begin position="89"/>
        <end position="96"/>
    </location>
</feature>
<feature type="helix" evidence="6">
    <location>
        <begin position="98"/>
        <end position="109"/>
    </location>
</feature>
<feature type="strand" evidence="6">
    <location>
        <begin position="115"/>
        <end position="120"/>
    </location>
</feature>
<feature type="helix" evidence="6">
    <location>
        <begin position="126"/>
        <end position="131"/>
    </location>
</feature>
<feature type="strand" evidence="7">
    <location>
        <begin position="134"/>
        <end position="136"/>
    </location>
</feature>
<feature type="strand" evidence="6">
    <location>
        <begin position="140"/>
        <end position="143"/>
    </location>
</feature>
<feature type="strand" evidence="6">
    <location>
        <begin position="160"/>
        <end position="163"/>
    </location>
</feature>
<feature type="helix" evidence="6">
    <location>
        <begin position="164"/>
        <end position="179"/>
    </location>
</feature>
<feature type="helix" evidence="6">
    <location>
        <begin position="181"/>
        <end position="183"/>
    </location>
</feature>
<feature type="strand" evidence="6">
    <location>
        <begin position="188"/>
        <end position="193"/>
    </location>
</feature>
<feature type="strand" evidence="6">
    <location>
        <begin position="197"/>
        <end position="199"/>
    </location>
</feature>
<feature type="helix" evidence="6">
    <location>
        <begin position="203"/>
        <end position="210"/>
    </location>
</feature>
<feature type="strand" evidence="6">
    <location>
        <begin position="214"/>
        <end position="223"/>
    </location>
</feature>
<feature type="helix" evidence="6">
    <location>
        <begin position="228"/>
        <end position="230"/>
    </location>
</feature>
<feature type="helix" evidence="6">
    <location>
        <begin position="234"/>
        <end position="248"/>
    </location>
</feature>
<dbReference type="EC" id="3.1.1.23"/>
<dbReference type="PIR" id="JC7669">
    <property type="entry name" value="JC7669"/>
</dbReference>
<dbReference type="PDB" id="3RLI">
    <property type="method" value="X-ray"/>
    <property type="resolution" value="1.85 A"/>
    <property type="chains" value="A=1-250"/>
</dbReference>
<dbReference type="PDB" id="3RM3">
    <property type="method" value="X-ray"/>
    <property type="resolution" value="1.20 A"/>
    <property type="chains" value="A=1-250"/>
</dbReference>
<dbReference type="PDB" id="4KE6">
    <property type="method" value="X-ray"/>
    <property type="resolution" value="2.80 A"/>
    <property type="chains" value="A/B/C/D/E/F=1-250"/>
</dbReference>
<dbReference type="PDB" id="4KE7">
    <property type="method" value="X-ray"/>
    <property type="resolution" value="1.70 A"/>
    <property type="chains" value="A/B=1-250"/>
</dbReference>
<dbReference type="PDB" id="4KE8">
    <property type="method" value="X-ray"/>
    <property type="resolution" value="1.85 A"/>
    <property type="chains" value="A/B/C/D=1-250"/>
</dbReference>
<dbReference type="PDB" id="4KE9">
    <property type="method" value="X-ray"/>
    <property type="resolution" value="2.20 A"/>
    <property type="chains" value="A/B/C/D=3-250"/>
</dbReference>
<dbReference type="PDB" id="4KEA">
    <property type="method" value="X-ray"/>
    <property type="resolution" value="1.70 A"/>
    <property type="chains" value="A/B/C/D/E/F=1-250"/>
</dbReference>
<dbReference type="PDB" id="4LHE">
    <property type="method" value="X-ray"/>
    <property type="resolution" value="1.96 A"/>
    <property type="chains" value="A/B=1-250"/>
</dbReference>
<dbReference type="PDBsum" id="3RLI"/>
<dbReference type="PDBsum" id="3RM3"/>
<dbReference type="PDBsum" id="4KE6"/>
<dbReference type="PDBsum" id="4KE7"/>
<dbReference type="PDBsum" id="4KE8"/>
<dbReference type="PDBsum" id="4KE9"/>
<dbReference type="PDBsum" id="4KEA"/>
<dbReference type="PDBsum" id="4LHE"/>
<dbReference type="SMR" id="P82597"/>
<dbReference type="ESTHER" id="bac25-mglp">
    <property type="family name" value="CarbLipBact_2"/>
</dbReference>
<dbReference type="BRENDA" id="3.1.1.23">
    <property type="organism ID" value="691"/>
</dbReference>
<dbReference type="EvolutionaryTrace" id="P82597"/>
<dbReference type="GO" id="GO:0047372">
    <property type="term" value="F:monoacylglycerol lipase activity"/>
    <property type="evidence" value="ECO:0007669"/>
    <property type="project" value="UniProtKB-EC"/>
</dbReference>
<dbReference type="Gene3D" id="3.40.50.1820">
    <property type="entry name" value="alpha/beta hydrolase"/>
    <property type="match status" value="1"/>
</dbReference>
<dbReference type="InterPro" id="IPR029058">
    <property type="entry name" value="AB_hydrolase_fold"/>
</dbReference>
<dbReference type="InterPro" id="IPR012354">
    <property type="entry name" value="Esterase_lipase"/>
</dbReference>
<dbReference type="InterPro" id="IPR022742">
    <property type="entry name" value="Hydrolase_4"/>
</dbReference>
<dbReference type="InterPro" id="IPR051044">
    <property type="entry name" value="MAG_DAG_Lipase"/>
</dbReference>
<dbReference type="PANTHER" id="PTHR11614">
    <property type="entry name" value="PHOSPHOLIPASE-RELATED"/>
    <property type="match status" value="1"/>
</dbReference>
<dbReference type="Pfam" id="PF12146">
    <property type="entry name" value="Hydrolase_4"/>
    <property type="match status" value="1"/>
</dbReference>
<dbReference type="PIRSF" id="PIRSF017388">
    <property type="entry name" value="Esterase_lipase"/>
    <property type="match status" value="1"/>
</dbReference>
<dbReference type="SUPFAM" id="SSF53474">
    <property type="entry name" value="alpha/beta-Hydrolases"/>
    <property type="match status" value="1"/>
</dbReference>
<sequence length="250" mass="27359">MSEQYPVLSGAEPFYAENGPVGVLLVHGFTGTPHSMRPLAEAYAKAGYTVCLPRLKGHGTHYEDMERTTFHDWVASVEEGYGWLKQRCQTIFVTGLSMGGTLTLYLAEHHPDICGIVPINAAVDIPAIAAGMTGGGELPRYLDSIGSDLKNPDVKELAYEKTPTASLLQLARLMAQTKAKLDRIVCPALIFVSDEDHVVPPGNADIIFQGISSTEKEIVRLRNSYHVATLDYDQPMIIERSLEFFAKHAG</sequence>
<accession>P82597</accession>
<accession>Q7M0R0</accession>
<proteinExistence type="evidence at protein level"/>
<evidence type="ECO:0000269" key="1">
    <source>
    </source>
</evidence>
<evidence type="ECO:0000269" key="2">
    <source>
    </source>
</evidence>
<evidence type="ECO:0000269" key="3">
    <source>
    </source>
</evidence>
<evidence type="ECO:0000305" key="4"/>
<evidence type="ECO:0000312" key="5">
    <source>
        <dbReference type="PIR" id="JC7669"/>
    </source>
</evidence>
<evidence type="ECO:0007829" key="6">
    <source>
        <dbReference type="PDB" id="3RM3"/>
    </source>
</evidence>
<evidence type="ECO:0007829" key="7">
    <source>
        <dbReference type="PDB" id="4KEA"/>
    </source>
</evidence>